<gene>
    <name evidence="1" type="primary">moaA</name>
    <name type="ordered locus">Helmi_00640</name>
    <name type="ORF">HM1_0064</name>
</gene>
<feature type="chain" id="PRO_1000139328" description="GTP 3',8-cyclase">
    <location>
        <begin position="1"/>
        <end position="327"/>
    </location>
</feature>
<feature type="domain" description="Radical SAM core" evidence="2">
    <location>
        <begin position="4"/>
        <end position="226"/>
    </location>
</feature>
<feature type="binding site" evidence="1">
    <location>
        <position position="13"/>
    </location>
    <ligand>
        <name>GTP</name>
        <dbReference type="ChEBI" id="CHEBI:37565"/>
    </ligand>
</feature>
<feature type="binding site" evidence="1">
    <location>
        <position position="20"/>
    </location>
    <ligand>
        <name>[4Fe-4S] cluster</name>
        <dbReference type="ChEBI" id="CHEBI:49883"/>
        <label>1</label>
        <note>4Fe-4S-S-AdoMet</note>
    </ligand>
</feature>
<feature type="binding site" evidence="1">
    <location>
        <position position="24"/>
    </location>
    <ligand>
        <name>[4Fe-4S] cluster</name>
        <dbReference type="ChEBI" id="CHEBI:49883"/>
        <label>1</label>
        <note>4Fe-4S-S-AdoMet</note>
    </ligand>
</feature>
<feature type="binding site" evidence="1">
    <location>
        <position position="26"/>
    </location>
    <ligand>
        <name>S-adenosyl-L-methionine</name>
        <dbReference type="ChEBI" id="CHEBI:59789"/>
    </ligand>
</feature>
<feature type="binding site" evidence="1">
    <location>
        <position position="27"/>
    </location>
    <ligand>
        <name>[4Fe-4S] cluster</name>
        <dbReference type="ChEBI" id="CHEBI:49883"/>
        <label>1</label>
        <note>4Fe-4S-S-AdoMet</note>
    </ligand>
</feature>
<feature type="binding site" evidence="1">
    <location>
        <position position="63"/>
    </location>
    <ligand>
        <name>GTP</name>
        <dbReference type="ChEBI" id="CHEBI:37565"/>
    </ligand>
</feature>
<feature type="binding site" evidence="1">
    <location>
        <position position="67"/>
    </location>
    <ligand>
        <name>S-adenosyl-L-methionine</name>
        <dbReference type="ChEBI" id="CHEBI:59789"/>
    </ligand>
</feature>
<feature type="binding site" evidence="1">
    <location>
        <position position="94"/>
    </location>
    <ligand>
        <name>GTP</name>
        <dbReference type="ChEBI" id="CHEBI:37565"/>
    </ligand>
</feature>
<feature type="binding site" evidence="1">
    <location>
        <position position="118"/>
    </location>
    <ligand>
        <name>S-adenosyl-L-methionine</name>
        <dbReference type="ChEBI" id="CHEBI:59789"/>
    </ligand>
</feature>
<feature type="binding site" evidence="1">
    <location>
        <position position="155"/>
    </location>
    <ligand>
        <name>GTP</name>
        <dbReference type="ChEBI" id="CHEBI:37565"/>
    </ligand>
</feature>
<feature type="binding site" evidence="1">
    <location>
        <position position="189"/>
    </location>
    <ligand>
        <name>S-adenosyl-L-methionine</name>
        <dbReference type="ChEBI" id="CHEBI:59789"/>
    </ligand>
</feature>
<feature type="binding site" evidence="1">
    <location>
        <position position="254"/>
    </location>
    <ligand>
        <name>[4Fe-4S] cluster</name>
        <dbReference type="ChEBI" id="CHEBI:49883"/>
        <label>2</label>
        <note>4Fe-4S-substrate</note>
    </ligand>
</feature>
<feature type="binding site" evidence="1">
    <location>
        <position position="257"/>
    </location>
    <ligand>
        <name>[4Fe-4S] cluster</name>
        <dbReference type="ChEBI" id="CHEBI:49883"/>
        <label>2</label>
        <note>4Fe-4S-substrate</note>
    </ligand>
</feature>
<feature type="binding site" evidence="1">
    <location>
        <begin position="259"/>
        <end position="261"/>
    </location>
    <ligand>
        <name>GTP</name>
        <dbReference type="ChEBI" id="CHEBI:37565"/>
    </ligand>
</feature>
<feature type="binding site" evidence="1">
    <location>
        <position position="271"/>
    </location>
    <ligand>
        <name>[4Fe-4S] cluster</name>
        <dbReference type="ChEBI" id="CHEBI:49883"/>
        <label>2</label>
        <note>4Fe-4S-substrate</note>
    </ligand>
</feature>
<proteinExistence type="inferred from homology"/>
<organism>
    <name type="scientific">Heliobacterium modesticaldum (strain ATCC 51547 / Ice1)</name>
    <dbReference type="NCBI Taxonomy" id="498761"/>
    <lineage>
        <taxon>Bacteria</taxon>
        <taxon>Bacillati</taxon>
        <taxon>Bacillota</taxon>
        <taxon>Clostridia</taxon>
        <taxon>Eubacteriales</taxon>
        <taxon>Heliobacteriaceae</taxon>
        <taxon>Heliomicrobium</taxon>
    </lineage>
</organism>
<keyword id="KW-0004">4Fe-4S</keyword>
<keyword id="KW-0342">GTP-binding</keyword>
<keyword id="KW-0408">Iron</keyword>
<keyword id="KW-0411">Iron-sulfur</keyword>
<keyword id="KW-0456">Lyase</keyword>
<keyword id="KW-0479">Metal-binding</keyword>
<keyword id="KW-0501">Molybdenum cofactor biosynthesis</keyword>
<keyword id="KW-0547">Nucleotide-binding</keyword>
<keyword id="KW-1185">Reference proteome</keyword>
<keyword id="KW-0949">S-adenosyl-L-methionine</keyword>
<protein>
    <recommendedName>
        <fullName evidence="1">GTP 3',8-cyclase</fullName>
        <ecNumber evidence="1">4.1.99.22</ecNumber>
    </recommendedName>
    <alternativeName>
        <fullName evidence="1">Molybdenum cofactor biosynthesis protein A</fullName>
    </alternativeName>
</protein>
<sequence>MIDAFARDIHYLRVSVTDRCNLRCIYCMPEAGLPLVDHREVLRFEEFERLIAIAASQGIRRVRITGGEPLVRKGIVPFVARVKTMTGIEDVALTTNGLLLPRFASELKAAGLDRVNISLDTLRPERFRAVTRVGRIDDVWTGIEAALAADLHPVKLNVVVMGGVNDDEVADFARLTLQWPIHVRFIELMPIGEGDSRFRGQYVTIEQMKAKMAEQGLRLGDHPGIRGGGPARYHTLAGALGTVGFISAISKHFCGTCNRLRLTAEGKLRPCLHSRQEIDLRTPLRRGASDNLLARIFQKAVEAKPYQHHMLDEGWGDRPRLMSQIGG</sequence>
<accession>B0TI16</accession>
<comment type="function">
    <text evidence="1">Catalyzes the cyclization of GTP to (8S)-3',8-cyclo-7,8-dihydroguanosine 5'-triphosphate.</text>
</comment>
<comment type="catalytic activity">
    <reaction evidence="1">
        <text>GTP + AH2 + S-adenosyl-L-methionine = (8S)-3',8-cyclo-7,8-dihydroguanosine 5'-triphosphate + 5'-deoxyadenosine + L-methionine + A + H(+)</text>
        <dbReference type="Rhea" id="RHEA:49576"/>
        <dbReference type="ChEBI" id="CHEBI:13193"/>
        <dbReference type="ChEBI" id="CHEBI:15378"/>
        <dbReference type="ChEBI" id="CHEBI:17319"/>
        <dbReference type="ChEBI" id="CHEBI:17499"/>
        <dbReference type="ChEBI" id="CHEBI:37565"/>
        <dbReference type="ChEBI" id="CHEBI:57844"/>
        <dbReference type="ChEBI" id="CHEBI:59789"/>
        <dbReference type="ChEBI" id="CHEBI:131766"/>
        <dbReference type="EC" id="4.1.99.22"/>
    </reaction>
</comment>
<comment type="cofactor">
    <cofactor evidence="1">
        <name>[4Fe-4S] cluster</name>
        <dbReference type="ChEBI" id="CHEBI:49883"/>
    </cofactor>
    <text evidence="1">Binds 2 [4Fe-4S] clusters. Binds 1 [4Fe-4S] cluster coordinated with 3 cysteines and an exchangeable S-adenosyl-L-methionine and 1 [4Fe-4S] cluster coordinated with 3 cysteines and the GTP-derived substrate.</text>
</comment>
<comment type="pathway">
    <text evidence="1">Cofactor biosynthesis; molybdopterin biosynthesis.</text>
</comment>
<comment type="subunit">
    <text evidence="1">Monomer and homodimer.</text>
</comment>
<comment type="similarity">
    <text evidence="1">Belongs to the radical SAM superfamily. MoaA family.</text>
</comment>
<evidence type="ECO:0000255" key="1">
    <source>
        <dbReference type="HAMAP-Rule" id="MF_01225"/>
    </source>
</evidence>
<evidence type="ECO:0000255" key="2">
    <source>
        <dbReference type="PROSITE-ProRule" id="PRU01266"/>
    </source>
</evidence>
<dbReference type="EC" id="4.1.99.22" evidence="1"/>
<dbReference type="EMBL" id="CP000930">
    <property type="protein sequence ID" value="ABZ82689.1"/>
    <property type="molecule type" value="Genomic_DNA"/>
</dbReference>
<dbReference type="RefSeq" id="WP_012281238.1">
    <property type="nucleotide sequence ID" value="NC_010337.2"/>
</dbReference>
<dbReference type="SMR" id="B0TI16"/>
<dbReference type="STRING" id="498761.HM1_0064"/>
<dbReference type="KEGG" id="hmo:HM1_0064"/>
<dbReference type="eggNOG" id="COG2896">
    <property type="taxonomic scope" value="Bacteria"/>
</dbReference>
<dbReference type="HOGENOM" id="CLU_009273_0_1_9"/>
<dbReference type="OrthoDB" id="9763993at2"/>
<dbReference type="UniPathway" id="UPA00344"/>
<dbReference type="Proteomes" id="UP000008550">
    <property type="component" value="Chromosome"/>
</dbReference>
<dbReference type="GO" id="GO:0051539">
    <property type="term" value="F:4 iron, 4 sulfur cluster binding"/>
    <property type="evidence" value="ECO:0007669"/>
    <property type="project" value="UniProtKB-UniRule"/>
</dbReference>
<dbReference type="GO" id="GO:0061799">
    <property type="term" value="F:cyclic pyranopterin monophosphate synthase activity"/>
    <property type="evidence" value="ECO:0007669"/>
    <property type="project" value="TreeGrafter"/>
</dbReference>
<dbReference type="GO" id="GO:0061798">
    <property type="term" value="F:GTP 3',8'-cyclase activity"/>
    <property type="evidence" value="ECO:0007669"/>
    <property type="project" value="UniProtKB-UniRule"/>
</dbReference>
<dbReference type="GO" id="GO:0005525">
    <property type="term" value="F:GTP binding"/>
    <property type="evidence" value="ECO:0007669"/>
    <property type="project" value="UniProtKB-UniRule"/>
</dbReference>
<dbReference type="GO" id="GO:0046872">
    <property type="term" value="F:metal ion binding"/>
    <property type="evidence" value="ECO:0007669"/>
    <property type="project" value="UniProtKB-KW"/>
</dbReference>
<dbReference type="GO" id="GO:1904047">
    <property type="term" value="F:S-adenosyl-L-methionine binding"/>
    <property type="evidence" value="ECO:0007669"/>
    <property type="project" value="UniProtKB-UniRule"/>
</dbReference>
<dbReference type="GO" id="GO:0006777">
    <property type="term" value="P:Mo-molybdopterin cofactor biosynthetic process"/>
    <property type="evidence" value="ECO:0007669"/>
    <property type="project" value="UniProtKB-UniRule"/>
</dbReference>
<dbReference type="CDD" id="cd01335">
    <property type="entry name" value="Radical_SAM"/>
    <property type="match status" value="1"/>
</dbReference>
<dbReference type="CDD" id="cd21117">
    <property type="entry name" value="Twitch_MoaA"/>
    <property type="match status" value="1"/>
</dbReference>
<dbReference type="Gene3D" id="3.20.20.70">
    <property type="entry name" value="Aldolase class I"/>
    <property type="match status" value="1"/>
</dbReference>
<dbReference type="HAMAP" id="MF_01225_B">
    <property type="entry name" value="MoaA_B"/>
    <property type="match status" value="1"/>
</dbReference>
<dbReference type="InterPro" id="IPR013785">
    <property type="entry name" value="Aldolase_TIM"/>
</dbReference>
<dbReference type="InterPro" id="IPR006638">
    <property type="entry name" value="Elp3/MiaA/NifB-like_rSAM"/>
</dbReference>
<dbReference type="InterPro" id="IPR013483">
    <property type="entry name" value="MoaA"/>
</dbReference>
<dbReference type="InterPro" id="IPR000385">
    <property type="entry name" value="MoaA_NifB_PqqE_Fe-S-bd_CS"/>
</dbReference>
<dbReference type="InterPro" id="IPR010505">
    <property type="entry name" value="MoaA_twitch"/>
</dbReference>
<dbReference type="InterPro" id="IPR050105">
    <property type="entry name" value="MoCo_biosynth_MoaA/MoaC"/>
</dbReference>
<dbReference type="InterPro" id="IPR007197">
    <property type="entry name" value="rSAM"/>
</dbReference>
<dbReference type="NCBIfam" id="TIGR02666">
    <property type="entry name" value="moaA"/>
    <property type="match status" value="1"/>
</dbReference>
<dbReference type="NCBIfam" id="NF001199">
    <property type="entry name" value="PRK00164.2-1"/>
    <property type="match status" value="1"/>
</dbReference>
<dbReference type="PANTHER" id="PTHR22960:SF0">
    <property type="entry name" value="MOLYBDENUM COFACTOR BIOSYNTHESIS PROTEIN 1"/>
    <property type="match status" value="1"/>
</dbReference>
<dbReference type="PANTHER" id="PTHR22960">
    <property type="entry name" value="MOLYBDOPTERIN COFACTOR SYNTHESIS PROTEIN A"/>
    <property type="match status" value="1"/>
</dbReference>
<dbReference type="Pfam" id="PF13353">
    <property type="entry name" value="Fer4_12"/>
    <property type="match status" value="1"/>
</dbReference>
<dbReference type="Pfam" id="PF06463">
    <property type="entry name" value="Mob_synth_C"/>
    <property type="match status" value="1"/>
</dbReference>
<dbReference type="Pfam" id="PF04055">
    <property type="entry name" value="Radical_SAM"/>
    <property type="match status" value="1"/>
</dbReference>
<dbReference type="SFLD" id="SFLDG01383">
    <property type="entry name" value="cyclic_pyranopterin_phosphate"/>
    <property type="match status" value="1"/>
</dbReference>
<dbReference type="SFLD" id="SFLDS00029">
    <property type="entry name" value="Radical_SAM"/>
    <property type="match status" value="1"/>
</dbReference>
<dbReference type="SMART" id="SM00729">
    <property type="entry name" value="Elp3"/>
    <property type="match status" value="1"/>
</dbReference>
<dbReference type="SUPFAM" id="SSF102114">
    <property type="entry name" value="Radical SAM enzymes"/>
    <property type="match status" value="1"/>
</dbReference>
<dbReference type="PROSITE" id="PS01305">
    <property type="entry name" value="MOAA_NIFB_PQQE"/>
    <property type="match status" value="1"/>
</dbReference>
<dbReference type="PROSITE" id="PS51918">
    <property type="entry name" value="RADICAL_SAM"/>
    <property type="match status" value="1"/>
</dbReference>
<reference key="1">
    <citation type="journal article" date="2008" name="J. Bacteriol.">
        <title>The genome of Heliobacterium modesticaldum, a phototrophic representative of the Firmicutes containing the simplest photosynthetic apparatus.</title>
        <authorList>
            <person name="Sattley W.M."/>
            <person name="Madigan M.T."/>
            <person name="Swingley W.D."/>
            <person name="Cheung P.C."/>
            <person name="Clocksin K.M."/>
            <person name="Conrad A.L."/>
            <person name="Dejesa L.C."/>
            <person name="Honchak B.M."/>
            <person name="Jung D.O."/>
            <person name="Karbach L.E."/>
            <person name="Kurdoglu A."/>
            <person name="Lahiri S."/>
            <person name="Mastrian S.D."/>
            <person name="Page L.E."/>
            <person name="Taylor H.L."/>
            <person name="Wang Z.T."/>
            <person name="Raymond J."/>
            <person name="Chen M."/>
            <person name="Blankenship R.E."/>
            <person name="Touchman J.W."/>
        </authorList>
    </citation>
    <scope>NUCLEOTIDE SEQUENCE [LARGE SCALE GENOMIC DNA]</scope>
    <source>
        <strain>ATCC 51547 / Ice1</strain>
    </source>
</reference>
<name>MOAA_HELMI</name>